<protein>
    <recommendedName>
        <fullName evidence="1">ATP synthase subunit c</fullName>
    </recommendedName>
    <alternativeName>
        <fullName evidence="1">ATP synthase F(0) sector subunit c</fullName>
    </alternativeName>
    <alternativeName>
        <fullName evidence="1">F-type ATPase subunit c</fullName>
        <shortName evidence="1">F-ATPase subunit c</shortName>
    </alternativeName>
    <alternativeName>
        <fullName evidence="1">Lipid-binding protein</fullName>
    </alternativeName>
</protein>
<feature type="chain" id="PRO_1000184302" description="ATP synthase subunit c">
    <location>
        <begin position="1"/>
        <end position="81"/>
    </location>
</feature>
<feature type="transmembrane region" description="Helical" evidence="1">
    <location>
        <begin position="7"/>
        <end position="27"/>
    </location>
</feature>
<feature type="transmembrane region" description="Helical" evidence="1">
    <location>
        <begin position="55"/>
        <end position="75"/>
    </location>
</feature>
<feature type="site" description="Reversibly protonated during proton transport" evidence="1">
    <location>
        <position position="60"/>
    </location>
</feature>
<accession>B7I1V9</accession>
<keyword id="KW-0066">ATP synthesis</keyword>
<keyword id="KW-0997">Cell inner membrane</keyword>
<keyword id="KW-1003">Cell membrane</keyword>
<keyword id="KW-0138">CF(0)</keyword>
<keyword id="KW-0375">Hydrogen ion transport</keyword>
<keyword id="KW-0406">Ion transport</keyword>
<keyword id="KW-0446">Lipid-binding</keyword>
<keyword id="KW-0472">Membrane</keyword>
<keyword id="KW-0812">Transmembrane</keyword>
<keyword id="KW-1133">Transmembrane helix</keyword>
<keyword id="KW-0813">Transport</keyword>
<proteinExistence type="inferred from homology"/>
<dbReference type="EMBL" id="CP001182">
    <property type="protein sequence ID" value="ACJ39619.1"/>
    <property type="molecule type" value="Genomic_DNA"/>
</dbReference>
<dbReference type="RefSeq" id="WP_000424060.1">
    <property type="nucleotide sequence ID" value="NC_011586.2"/>
</dbReference>
<dbReference type="SMR" id="B7I1V9"/>
<dbReference type="GeneID" id="97424931"/>
<dbReference type="KEGG" id="abn:AB57_0188"/>
<dbReference type="HOGENOM" id="CLU_148047_1_0_6"/>
<dbReference type="Proteomes" id="UP000007094">
    <property type="component" value="Chromosome"/>
</dbReference>
<dbReference type="GO" id="GO:0005886">
    <property type="term" value="C:plasma membrane"/>
    <property type="evidence" value="ECO:0007669"/>
    <property type="project" value="UniProtKB-SubCell"/>
</dbReference>
<dbReference type="GO" id="GO:0045259">
    <property type="term" value="C:proton-transporting ATP synthase complex"/>
    <property type="evidence" value="ECO:0007669"/>
    <property type="project" value="UniProtKB-KW"/>
</dbReference>
<dbReference type="GO" id="GO:0033177">
    <property type="term" value="C:proton-transporting two-sector ATPase complex, proton-transporting domain"/>
    <property type="evidence" value="ECO:0007669"/>
    <property type="project" value="InterPro"/>
</dbReference>
<dbReference type="GO" id="GO:0008289">
    <property type="term" value="F:lipid binding"/>
    <property type="evidence" value="ECO:0007669"/>
    <property type="project" value="UniProtKB-KW"/>
</dbReference>
<dbReference type="GO" id="GO:0046933">
    <property type="term" value="F:proton-transporting ATP synthase activity, rotational mechanism"/>
    <property type="evidence" value="ECO:0007669"/>
    <property type="project" value="UniProtKB-UniRule"/>
</dbReference>
<dbReference type="CDD" id="cd18185">
    <property type="entry name" value="ATP-synt_Fo_c_ATPE"/>
    <property type="match status" value="1"/>
</dbReference>
<dbReference type="FunFam" id="1.20.20.10:FF:000002">
    <property type="entry name" value="ATP synthase subunit c"/>
    <property type="match status" value="1"/>
</dbReference>
<dbReference type="Gene3D" id="1.20.20.10">
    <property type="entry name" value="F1F0 ATP synthase subunit C"/>
    <property type="match status" value="1"/>
</dbReference>
<dbReference type="HAMAP" id="MF_01396">
    <property type="entry name" value="ATP_synth_c_bact"/>
    <property type="match status" value="1"/>
</dbReference>
<dbReference type="InterPro" id="IPR005953">
    <property type="entry name" value="ATP_synth_csu_bac/chlpt"/>
</dbReference>
<dbReference type="InterPro" id="IPR000454">
    <property type="entry name" value="ATP_synth_F0_csu"/>
</dbReference>
<dbReference type="InterPro" id="IPR020537">
    <property type="entry name" value="ATP_synth_F0_csu_DDCD_BS"/>
</dbReference>
<dbReference type="InterPro" id="IPR038662">
    <property type="entry name" value="ATP_synth_F0_csu_sf"/>
</dbReference>
<dbReference type="InterPro" id="IPR002379">
    <property type="entry name" value="ATPase_proteolipid_c-like_dom"/>
</dbReference>
<dbReference type="InterPro" id="IPR035921">
    <property type="entry name" value="F/V-ATP_Csub_sf"/>
</dbReference>
<dbReference type="NCBIfam" id="TIGR01260">
    <property type="entry name" value="ATP_synt_c"/>
    <property type="match status" value="1"/>
</dbReference>
<dbReference type="NCBIfam" id="NF005363">
    <property type="entry name" value="PRK06876.1"/>
    <property type="match status" value="1"/>
</dbReference>
<dbReference type="Pfam" id="PF00137">
    <property type="entry name" value="ATP-synt_C"/>
    <property type="match status" value="1"/>
</dbReference>
<dbReference type="PRINTS" id="PR00124">
    <property type="entry name" value="ATPASEC"/>
</dbReference>
<dbReference type="SUPFAM" id="SSF81333">
    <property type="entry name" value="F1F0 ATP synthase subunit C"/>
    <property type="match status" value="1"/>
</dbReference>
<dbReference type="PROSITE" id="PS00605">
    <property type="entry name" value="ATPASE_C"/>
    <property type="match status" value="1"/>
</dbReference>
<reference key="1">
    <citation type="journal article" date="2008" name="J. Bacteriol.">
        <title>Comparative genome sequence analysis of multidrug-resistant Acinetobacter baumannii.</title>
        <authorList>
            <person name="Adams M.D."/>
            <person name="Goglin K."/>
            <person name="Molyneaux N."/>
            <person name="Hujer K.M."/>
            <person name="Lavender H."/>
            <person name="Jamison J.J."/>
            <person name="MacDonald I.J."/>
            <person name="Martin K.M."/>
            <person name="Russo T."/>
            <person name="Campagnari A.A."/>
            <person name="Hujer A.M."/>
            <person name="Bonomo R.A."/>
            <person name="Gill S.R."/>
        </authorList>
    </citation>
    <scope>NUCLEOTIDE SEQUENCE [LARGE SCALE GENOMIC DNA]</scope>
    <source>
        <strain>AB0057</strain>
    </source>
</reference>
<name>ATPL_ACIB5</name>
<comment type="function">
    <text evidence="1">F(1)F(0) ATP synthase produces ATP from ADP in the presence of a proton or sodium gradient. F-type ATPases consist of two structural domains, F(1) containing the extramembraneous catalytic core and F(0) containing the membrane proton channel, linked together by a central stalk and a peripheral stalk. During catalysis, ATP synthesis in the catalytic domain of F(1) is coupled via a rotary mechanism of the central stalk subunits to proton translocation.</text>
</comment>
<comment type="function">
    <text evidence="1">Key component of the F(0) channel; it plays a direct role in translocation across the membrane. A homomeric c-ring of between 10-14 subunits forms the central stalk rotor element with the F(1) delta and epsilon subunits.</text>
</comment>
<comment type="subunit">
    <text evidence="1">F-type ATPases have 2 components, F(1) - the catalytic core - and F(0) - the membrane proton channel. F(1) has five subunits: alpha(3), beta(3), gamma(1), delta(1), epsilon(1). F(0) has three main subunits: a(1), b(2) and c(10-14). The alpha and beta chains form an alternating ring which encloses part of the gamma chain. F(1) is attached to F(0) by a central stalk formed by the gamma and epsilon chains, while a peripheral stalk is formed by the delta and b chains.</text>
</comment>
<comment type="subcellular location">
    <subcellularLocation>
        <location evidence="1">Cell inner membrane</location>
        <topology evidence="1">Multi-pass membrane protein</topology>
    </subcellularLocation>
</comment>
<comment type="similarity">
    <text evidence="1">Belongs to the ATPase C chain family.</text>
</comment>
<organism>
    <name type="scientific">Acinetobacter baumannii (strain AB0057)</name>
    <dbReference type="NCBI Taxonomy" id="480119"/>
    <lineage>
        <taxon>Bacteria</taxon>
        <taxon>Pseudomonadati</taxon>
        <taxon>Pseudomonadota</taxon>
        <taxon>Gammaproteobacteria</taxon>
        <taxon>Moraxellales</taxon>
        <taxon>Moraxellaceae</taxon>
        <taxon>Acinetobacter</taxon>
        <taxon>Acinetobacter calcoaceticus/baumannii complex</taxon>
    </lineage>
</organism>
<gene>
    <name evidence="1" type="primary">atpE</name>
    <name type="ordered locus">AB57_0188</name>
</gene>
<evidence type="ECO:0000255" key="1">
    <source>
        <dbReference type="HAMAP-Rule" id="MF_01396"/>
    </source>
</evidence>
<sequence>MELTLGLVAIASAILIAFGALGTAIGFGLLGGRFLEAVARQPELAPQLQTRMFLIAGLLDAVPMIGVGIGLFFIFANPFVG</sequence>